<protein>
    <recommendedName>
        <fullName evidence="1">Der GTPase-activating protein YihI</fullName>
    </recommendedName>
</protein>
<name>YIHI_AERS4</name>
<evidence type="ECO:0000255" key="1">
    <source>
        <dbReference type="HAMAP-Rule" id="MF_01058"/>
    </source>
</evidence>
<evidence type="ECO:0000256" key="2">
    <source>
        <dbReference type="SAM" id="MobiDB-lite"/>
    </source>
</evidence>
<evidence type="ECO:0000305" key="3"/>
<keyword id="KW-0343">GTPase activation</keyword>
<keyword id="KW-0690">Ribosome biogenesis</keyword>
<gene>
    <name evidence="1" type="primary">yihI</name>
    <name type="ordered locus">ASA_4127</name>
</gene>
<organism>
    <name type="scientific">Aeromonas salmonicida (strain A449)</name>
    <dbReference type="NCBI Taxonomy" id="382245"/>
    <lineage>
        <taxon>Bacteria</taxon>
        <taxon>Pseudomonadati</taxon>
        <taxon>Pseudomonadota</taxon>
        <taxon>Gammaproteobacteria</taxon>
        <taxon>Aeromonadales</taxon>
        <taxon>Aeromonadaceae</taxon>
        <taxon>Aeromonas</taxon>
    </lineage>
</organism>
<dbReference type="EMBL" id="CP000644">
    <property type="protein sequence ID" value="ABO92067.1"/>
    <property type="status" value="ALT_INIT"/>
    <property type="molecule type" value="Genomic_DNA"/>
</dbReference>
<dbReference type="RefSeq" id="WP_005319890.1">
    <property type="nucleotide sequence ID" value="NC_009348.1"/>
</dbReference>
<dbReference type="SMR" id="A4ST45"/>
<dbReference type="STRING" id="29491.GCA_000820065_03424"/>
<dbReference type="KEGG" id="asa:ASA_4127"/>
<dbReference type="eggNOG" id="COG3078">
    <property type="taxonomic scope" value="Bacteria"/>
</dbReference>
<dbReference type="HOGENOM" id="CLU_094104_0_0_6"/>
<dbReference type="Proteomes" id="UP000000225">
    <property type="component" value="Chromosome"/>
</dbReference>
<dbReference type="GO" id="GO:0005096">
    <property type="term" value="F:GTPase activator activity"/>
    <property type="evidence" value="ECO:0007669"/>
    <property type="project" value="UniProtKB-KW"/>
</dbReference>
<dbReference type="GO" id="GO:0042254">
    <property type="term" value="P:ribosome biogenesis"/>
    <property type="evidence" value="ECO:0007669"/>
    <property type="project" value="UniProtKB-KW"/>
</dbReference>
<dbReference type="HAMAP" id="MF_01058">
    <property type="entry name" value="GAP_YihI"/>
    <property type="match status" value="1"/>
</dbReference>
<dbReference type="InterPro" id="IPR007336">
    <property type="entry name" value="YihI"/>
</dbReference>
<dbReference type="NCBIfam" id="NF003560">
    <property type="entry name" value="PRK05244.1-1"/>
    <property type="match status" value="1"/>
</dbReference>
<dbReference type="Pfam" id="PF04220">
    <property type="entry name" value="YihI"/>
    <property type="match status" value="1"/>
</dbReference>
<sequence length="193" mass="21714">MSAKQPNRKPTGKRKESDASALDGRERKRAAKRKGLKAGSRQQAEQSSKNNNGKQAKDPRIGSRKPVALIVDEKGAKPVAPKPAKEKKLVMTPEQELAAIENDDRLNDLLDRLDAGETLEATEQAWVDQRVDRYQELMDELGIIDNDDDEEDDGSFDDASYEAPTQPASEEELWDRFTQVDYQPEPKPEPKKK</sequence>
<accession>A4ST45</accession>
<feature type="chain" id="PRO_0000402181" description="Der GTPase-activating protein YihI">
    <location>
        <begin position="1"/>
        <end position="193"/>
    </location>
</feature>
<feature type="region of interest" description="Disordered" evidence="2">
    <location>
        <begin position="1"/>
        <end position="91"/>
    </location>
</feature>
<feature type="region of interest" description="Disordered" evidence="2">
    <location>
        <begin position="143"/>
        <end position="193"/>
    </location>
</feature>
<feature type="compositionally biased region" description="Basic residues" evidence="2">
    <location>
        <begin position="1"/>
        <end position="12"/>
    </location>
</feature>
<feature type="compositionally biased region" description="Basic and acidic residues" evidence="2">
    <location>
        <begin position="13"/>
        <end position="26"/>
    </location>
</feature>
<feature type="compositionally biased region" description="Basic residues" evidence="2">
    <location>
        <begin position="27"/>
        <end position="36"/>
    </location>
</feature>
<feature type="compositionally biased region" description="Polar residues" evidence="2">
    <location>
        <begin position="40"/>
        <end position="54"/>
    </location>
</feature>
<feature type="compositionally biased region" description="Acidic residues" evidence="2">
    <location>
        <begin position="145"/>
        <end position="160"/>
    </location>
</feature>
<feature type="compositionally biased region" description="Basic and acidic residues" evidence="2">
    <location>
        <begin position="184"/>
        <end position="193"/>
    </location>
</feature>
<comment type="function">
    <text evidence="1">A GTPase-activating protein (GAP) that modifies Der/EngA GTPase function. May play a role in ribosome biogenesis.</text>
</comment>
<comment type="subunit">
    <text evidence="1">Interacts with Der.</text>
</comment>
<comment type="similarity">
    <text evidence="1">Belongs to the YihI family.</text>
</comment>
<comment type="sequence caution" evidence="3">
    <conflict type="erroneous initiation">
        <sequence resource="EMBL-CDS" id="ABO92067"/>
    </conflict>
    <text>Extended N-terminus.</text>
</comment>
<proteinExistence type="inferred from homology"/>
<reference key="1">
    <citation type="journal article" date="2008" name="BMC Genomics">
        <title>The genome of Aeromonas salmonicida subsp. salmonicida A449: insights into the evolution of a fish pathogen.</title>
        <authorList>
            <person name="Reith M.E."/>
            <person name="Singh R.K."/>
            <person name="Curtis B."/>
            <person name="Boyd J.M."/>
            <person name="Bouevitch A."/>
            <person name="Kimball J."/>
            <person name="Munholland J."/>
            <person name="Murphy C."/>
            <person name="Sarty D."/>
            <person name="Williams J."/>
            <person name="Nash J.H."/>
            <person name="Johnson S.C."/>
            <person name="Brown L.L."/>
        </authorList>
    </citation>
    <scope>NUCLEOTIDE SEQUENCE [LARGE SCALE GENOMIC DNA]</scope>
    <source>
        <strain>A449</strain>
    </source>
</reference>